<reference key="1">
    <citation type="journal article" date="1985" name="Virology">
        <title>Human papillomavirus type 16 DNA sequence.</title>
        <authorList>
            <person name="Seedorf K."/>
            <person name="Krammer G."/>
            <person name="Durst M."/>
            <person name="Suhai S."/>
            <person name="Rowekamp W.G."/>
        </authorList>
    </citation>
    <scope>NUCLEOTIDE SEQUENCE [GENOMIC DNA]</scope>
</reference>
<reference key="2">
    <citation type="journal article" date="1990" name="J. Gen. Virol.">
        <title>Expression of the human papillomavirus type 16 genome in SK-v cells, a line derived from a vulvar intraepithelial neoplasia.</title>
        <authorList>
            <person name="Schneider-Maunoury S."/>
            <person name="Pehau-Arnaudet G."/>
            <person name="Breitburd F."/>
            <person name="Orth G."/>
        </authorList>
    </citation>
    <scope>NUCLEOTIDE SEQUENCE [GENOMIC DNA]</scope>
</reference>
<reference key="3">
    <citation type="journal article" date="1997" name="J. Gen. Virol.">
        <title>Sequence variations and viral genomic state of human papillomavirus type 16 in penile carcinomas from Ugandan patients.</title>
        <authorList>
            <person name="Tornesello M.L."/>
            <person name="Buonaguro F.M."/>
            <person name="Meglio A."/>
            <person name="Buonaguro L."/>
            <person name="Beth-Giraldo E."/>
            <person name="Giraldo G."/>
        </authorList>
    </citation>
    <scope>NUCLEOTIDE SEQUENCE [GENOMIC DNA]</scope>
</reference>
<reference key="4">
    <citation type="submission" date="1996-11" db="EMBL/GenBank/DDBJ databases">
        <title>Major sequence variations in E7 gene of human papillomavirus type 16 from cervical cancerous and non-cancerous lesions of Korean women.</title>
        <authorList>
            <person name="Song Y.S."/>
            <person name="Kee S.H."/>
            <person name="Kim J.W."/>
            <person name="Park N.H."/>
            <person name="Kang S.B."/>
            <person name="Lee H.P."/>
        </authorList>
    </citation>
    <scope>NUCLEOTIDE SEQUENCE [GENOMIC DNA]</scope>
</reference>
<reference key="5">
    <citation type="submission" date="2002-08" db="EMBL/GenBank/DDBJ databases">
        <title>Cloning and sequencing of non-European human papillomavirus (HPV) variant complete genomes from cervicovaginal cells by an overlapping PCR method.</title>
        <authorList>
            <person name="Terai M."/>
            <person name="Fu L."/>
            <person name="Ma Z."/>
            <person name="Burk R.D."/>
        </authorList>
    </citation>
    <scope>NUCLEOTIDE SEQUENCE [GENOMIC DNA]</scope>
    <source>
        <strain>Isolate African 1</strain>
        <strain>Isolate European German 131</strain>
    </source>
</reference>
<reference key="6">
    <citation type="journal article" date="1987" name="J. Virol.">
        <title>The major human papillomavirus protein in cervical cancers is a cytoplasmic phosphoprotein.</title>
        <authorList>
            <person name="Smotkin D."/>
            <person name="Wettstein F.O."/>
        </authorList>
    </citation>
    <scope>PHOSPHORYLATION</scope>
    <scope>SUBCELLULAR LOCATION</scope>
</reference>
<reference key="7">
    <citation type="journal article" date="1988" name="Cell">
        <title>The human papillomavirus type 16 E7 gene encodes transactivation and transformation functions similar to those of adenovirus E1A.</title>
        <authorList>
            <person name="Phelps W.C."/>
            <person name="Yee C.L."/>
            <person name="Munger K."/>
            <person name="Howley P.M."/>
        </authorList>
    </citation>
    <scope>FUNCTION</scope>
</reference>
<reference key="8">
    <citation type="journal article" date="1992" name="Proc. Natl. Acad. Sci. U.S.A.">
        <title>Adenovirus E1A, simian virus 40 tumor antigen, and human papillomavirus E7 protein share the capacity to disrupt the interaction between transcription factor E2F and the retinoblastoma gene product.</title>
        <authorList>
            <person name="Chellappan S."/>
            <person name="Kraus V.B."/>
            <person name="Kroger B."/>
            <person name="Munger K."/>
            <person name="Howley P.M."/>
            <person name="Phelps W.C."/>
            <person name="Nevins J.R."/>
        </authorList>
    </citation>
    <scope>INTERACTION WITH HUMAN RB1</scope>
    <scope>FUNCTION</scope>
</reference>
<reference key="9">
    <citation type="journal article" date="1999" name="EMBO J.">
        <title>The E7 oncoprotein associates with Mi2 and histone deacetylase activity to promote cell growth.</title>
        <authorList>
            <person name="Brehm A."/>
            <person name="Nielsen S.J."/>
            <person name="Miska E.A."/>
            <person name="McCance D.J."/>
            <person name="Reid J.L."/>
            <person name="Bannister A.J."/>
            <person name="Kouzarides T."/>
        </authorList>
    </citation>
    <scope>INTERACTION WITH HUMAN CHD4</scope>
    <scope>IDENTIFICATION IN A COMPLEX WITH HUMAN HDAC1 AND CHD4</scope>
    <scope>MUTAGENESIS OF LEU-67; 82-LEU-LEU-83 AND CYS-91</scope>
</reference>
<reference key="10">
    <citation type="journal article" date="2000" name="Biochemistry">
        <title>Oligomerization properties of the viral oncoproteins adenovirus E1A and human papillomavirus E7 and their complexes with the retinoblastoma protein.</title>
        <authorList>
            <person name="Clements A."/>
            <person name="Johnston K."/>
            <person name="Mazzarelli J.M."/>
            <person name="Ricciardi R.P."/>
            <person name="Marmorstein R."/>
        </authorList>
    </citation>
    <scope>SUBUNIT</scope>
</reference>
<reference key="11">
    <citation type="journal article" date="2000" name="Virology">
        <title>The human papillomavirus E7 protein is able to inhibit the antiviral and anti-growth functions of interferon-alpha.</title>
        <authorList>
            <person name="Barnard P."/>
            <person name="Payne E."/>
            <person name="McMillan N.A."/>
        </authorList>
    </citation>
    <scope>FUNCTION</scope>
</reference>
<reference key="12">
    <citation type="journal article" date="2003" name="Oncogene">
        <title>Interaction between the HPV E7 oncoprotein and the transcriptional coactivator p300.</title>
        <authorList>
            <person name="Bernat A."/>
            <person name="Avvakumov N."/>
            <person name="Mymryk J.S."/>
            <person name="Banks L."/>
        </authorList>
    </citation>
    <scope>INTERACTION WITH HOST EP300</scope>
</reference>
<reference key="13">
    <citation type="journal article" date="2004" name="Biochemistry">
        <title>The HPV16 E7 viral oncoprotein self-assembles into defined spherical oligomers.</title>
        <authorList>
            <person name="Alonso L.G."/>
            <person name="Garcia-Alai M.M."/>
            <person name="Smal C."/>
            <person name="Centeno J.M."/>
            <person name="Iacono R."/>
            <person name="Castano E."/>
            <person name="Gualfetti P."/>
            <person name="de Prat-Gay G."/>
        </authorList>
    </citation>
    <scope>SUBUNIT</scope>
</reference>
<reference key="14">
    <citation type="journal article" date="2006" name="J. Virol.">
        <title>Regulation of human papillomavirus type 16 E7 activity through direct protein interaction with the E2 transcriptional activator.</title>
        <authorList>
            <person name="Gammoh N."/>
            <person name="Grm H.S."/>
            <person name="Massimi P."/>
            <person name="Banks L."/>
        </authorList>
    </citation>
    <scope>INTERACTION WITH E2</scope>
</reference>
<reference key="15">
    <citation type="journal article" date="2007" name="Biochemistry">
        <title>The N-terminal module of HPV16 E7 is an intrinsically disordered domain that confers conformational and recognition plasticity to the oncoprotein.</title>
        <authorList>
            <person name="Garcia-Alai M.M."/>
            <person name="Alonso L.G."/>
            <person name="de Prat-Gay G."/>
        </authorList>
    </citation>
    <scope>DOMAIN</scope>
</reference>
<reference key="16">
    <citation type="journal article" date="2002" name="Rev. Med. Virol.">
        <title>Interactions of SV40 large T antigen and other viral proteins with retinoblastoma tumour suppressor.</title>
        <authorList>
            <person name="Lee C."/>
            <person name="Cho Y."/>
        </authorList>
    </citation>
    <scope>REVIEW</scope>
</reference>
<reference key="17">
    <citation type="journal article" date="2009" name="Virology">
        <title>Identification of the nuclear localization and export signals of high risk HPV16 E7 oncoprotein.</title>
        <authorList>
            <person name="Knapp A.A."/>
            <person name="McManus P.M."/>
            <person name="Bockstall K."/>
            <person name="Moroianu J."/>
        </authorList>
    </citation>
    <scope>SUBCELLULAR LOCATION</scope>
    <scope>NUCLEAR EXPORT SIGNAL</scope>
</reference>
<reference key="18">
    <citation type="journal article" date="2021" name="Nature">
        <title>Defining HPV-specific B cell responses in patients with head and neck cancer.</title>
        <authorList>
            <person name="Wieland A."/>
            <person name="Patel M.R."/>
            <person name="Cardenas M.A."/>
            <person name="Eberhardt C.S."/>
            <person name="Hudson W.H."/>
            <person name="Obeng R.C."/>
            <person name="Griffith C.C."/>
            <person name="Wang X."/>
            <person name="Chen Z.G."/>
            <person name="Kissick H.T."/>
            <person name="Saba N.F."/>
            <person name="Ahmed R."/>
        </authorList>
    </citation>
    <scope>ROLE AS ANTIGEN IN HEAD AND NECK SQUAMOUS CELL CARCINOMA</scope>
</reference>
<reference key="19">
    <citation type="journal article" date="2021" name="Nature">
        <title>Functional HPV-specific PD-1+ stem-like CD8 T cells in head and neck cancer.</title>
        <authorList>
            <person name="Eberhardt C.S."/>
            <person name="Kissick H.T."/>
            <person name="Patel M.R."/>
            <person name="Cardenas M.A."/>
            <person name="Prokhnevska N."/>
            <person name="Obeng R.C."/>
            <person name="Nasti T.H."/>
            <person name="Griffith C.C."/>
            <person name="Im S.J."/>
            <person name="Wang X."/>
            <person name="Shin D.M."/>
            <person name="Carrington M."/>
            <person name="Chen Z.G."/>
            <person name="Sidney J."/>
            <person name="Sette A."/>
            <person name="Saba N.F."/>
            <person name="Wieland A."/>
            <person name="Ahmed R."/>
        </authorList>
    </citation>
    <scope>ROLE AS ANTIGEN IN HEAD AND NECK SQUAMOUS CELL CARCINOMA</scope>
</reference>
<reference key="20">
    <citation type="journal article" date="2015" name="Genes Dev.">
        <title>Structural mechanisms of DREAM complex assembly and regulation.</title>
        <authorList>
            <person name="Guiley K.Z."/>
            <person name="Liban T.J."/>
            <person name="Felthousen J.G."/>
            <person name="Ramanan P."/>
            <person name="Litovchick L."/>
            <person name="Rubin S.M."/>
        </authorList>
    </citation>
    <scope>X-RAY CRYSTALLOGRAPHY (2.25 ANGSTROMS) OF 21-29</scope>
</reference>
<feature type="chain" id="PRO_0000133414" description="Protein E7">
    <location>
        <begin position="1"/>
        <end position="98"/>
    </location>
</feature>
<feature type="zinc finger region" evidence="1">
    <location>
        <begin position="58"/>
        <end position="94"/>
    </location>
</feature>
<feature type="region of interest" description="E7 terminal domain" evidence="1 9">
    <location>
        <begin position="1"/>
        <end position="40"/>
    </location>
</feature>
<feature type="short sequence motif" description="LXCXE motif; interaction with host RB1 and TMEM173/STING" evidence="1">
    <location>
        <begin position="22"/>
        <end position="26"/>
    </location>
</feature>
<feature type="short sequence motif" description="Nuclear export signal" evidence="1 10">
    <location>
        <begin position="76"/>
        <end position="84"/>
    </location>
</feature>
<feature type="mutagenesis site" description="Complete loss of interaction with HDAC1 and transformation ability." evidence="2">
    <original>L</original>
    <variation>R</variation>
    <location>
        <position position="67"/>
    </location>
</feature>
<feature type="mutagenesis site" description="Complete loss of interaction with HDAC1 and transformation ability." evidence="2">
    <original>LL</original>
    <variation>RR</variation>
    <location>
        <begin position="82"/>
        <end position="83"/>
    </location>
</feature>
<feature type="mutagenesis site" description="Complete loss of interaction with HDAC1 and transformation ability." evidence="2">
    <original>C</original>
    <variation>G</variation>
    <location>
        <position position="91"/>
    </location>
</feature>
<feature type="turn" evidence="15">
    <location>
        <begin position="17"/>
        <end position="20"/>
    </location>
</feature>
<organism>
    <name type="scientific">Human papillomavirus type 16</name>
    <dbReference type="NCBI Taxonomy" id="333760"/>
    <lineage>
        <taxon>Viruses</taxon>
        <taxon>Monodnaviria</taxon>
        <taxon>Shotokuvirae</taxon>
        <taxon>Cossaviricota</taxon>
        <taxon>Papovaviricetes</taxon>
        <taxon>Zurhausenvirales</taxon>
        <taxon>Papillomaviridae</taxon>
        <taxon>Firstpapillomavirinae</taxon>
        <taxon>Alphapapillomavirus</taxon>
        <taxon>Alphapapillomavirus 9</taxon>
    </lineage>
</organism>
<name>VE7_HPV16</name>
<comment type="function">
    <text evidence="1 3 6 11">Plays a role in viral genome replication by driving entry of quiescent cells into the cell cycle. Stimulation of progression from G1 to S phase allows the virus to efficiently use the cellular DNA replicating machinery to achieve viral genome replication. E7 protein has both transforming and trans-activating activities. Induces the disassembly of the E2F1 transcription factor from RB1, with subsequent transcriptional activation of E2F1-regulated S-phase genes. Interferes with host histone deacetylation mediated by HDAC1 and HDAC2, leading to transcription activation. Also plays a role in the inhibition of both antiviral and antiproliferative functions of host interferon alpha. Interaction with host TMEM173/STING impairs the ability of TMEM173/STING to sense cytosolic DNA and promote the production of type I interferon (IFN-alpha and IFN-beta).</text>
</comment>
<comment type="subunit">
    <text evidence="1 2 4 5 6 7 8">Homodimer (PubMed:11123931). Homooligomer (PubMed:15035602). Interacts with host RB1; this interaction induces dissociation of RB1-E2F1 complex thereby disrupting RB1 activity (PubMed:1316611). Interacts with host EP300; this interaction represses EP300 transcriptional activity (PubMed:12970734). Forms a complex with CHD4 and HDAC1, thereby altering the action of host histone deacetylation. A similar complex involving E7, CHD4 and HDAC2 may also form (PubMed:10228159). Interacts with protein E2; this interaction inhibits E7 oncogenic activity (PubMed:16439535).</text>
</comment>
<comment type="interaction">
    <interactant intactId="EBI-866453">
        <id>P03129</id>
    </interactant>
    <interactant intactId="EBI-457097">
        <id>P20248</id>
        <label>CCNA2</label>
    </interactant>
    <organismsDiffer>true</organismsDiffer>
    <experiments>2</experiments>
</comment>
<comment type="interaction">
    <interactant intactId="EBI-866453">
        <id>P03129</id>
    </interactant>
    <interactant intactId="EBI-375096">
        <id>P24941</id>
        <label>CDK2</label>
    </interactant>
    <organismsDiffer>true</organismsDiffer>
    <experiments>2</experiments>
</comment>
<comment type="interaction">
    <interactant intactId="EBI-866453">
        <id>P03129</id>
    </interactant>
    <interactant intactId="EBI-81249">
        <id>O15111</id>
        <label>CHUK</label>
    </interactant>
    <organismsDiffer>true</organismsDiffer>
    <experiments>2</experiments>
</comment>
<comment type="interaction">
    <interactant intactId="EBI-866453">
        <id>P03129</id>
    </interactant>
    <interactant intactId="EBI-448924">
        <id>Q01094</id>
        <label>E2F1</label>
    </interactant>
    <organismsDiffer>true</organismsDiffer>
    <experiments>2</experiments>
</comment>
<comment type="interaction">
    <interactant intactId="EBI-866453">
        <id>P03129</id>
    </interactant>
    <interactant intactId="EBI-448943">
        <id>Q16254</id>
        <label>E2F4</label>
    </interactant>
    <organismsDiffer>true</organismsDiffer>
    <experiments>2</experiments>
</comment>
<comment type="interaction">
    <interactant intactId="EBI-866453">
        <id>P03129</id>
    </interactant>
    <interactant intactId="EBI-866499">
        <id>Q08050-1</id>
        <label>FOXM1</label>
    </interactant>
    <organismsDiffer>true</organismsDiffer>
    <experiments>3</experiments>
</comment>
<comment type="interaction">
    <interactant intactId="EBI-866453">
        <id>P03129</id>
    </interactant>
    <interactant intactId="EBI-1055781">
        <id>P10914</id>
        <label>IRF1</label>
    </interactant>
    <organismsDiffer>true</organismsDiffer>
    <experiments>3</experiments>
</comment>
<comment type="interaction">
    <interactant intactId="EBI-866453">
        <id>P03129</id>
    </interactant>
    <interactant intactId="EBI-477430">
        <id>Q92831</id>
        <label>KAT2B</label>
    </interactant>
    <organismsDiffer>true</organismsDiffer>
    <experiments>3</experiments>
</comment>
<comment type="interaction">
    <interactant intactId="EBI-866453">
        <id>P03129</id>
    </interactant>
    <interactant intactId="EBI-447544">
        <id>P01106</id>
        <label>MYC</label>
    </interactant>
    <organismsDiffer>true</organismsDiffer>
    <experiments>2</experiments>
</comment>
<comment type="interaction">
    <interactant intactId="EBI-866453">
        <id>P03129</id>
    </interactant>
    <interactant intactId="EBI-712311">
        <id>P67775</id>
        <label>PPP2CA</label>
    </interactant>
    <organismsDiffer>true</organismsDiffer>
    <experiments>3</experiments>
</comment>
<comment type="interaction">
    <interactant intactId="EBI-866453">
        <id>P03129</id>
    </interactant>
    <interactant intactId="EBI-302388">
        <id>P30153</id>
        <label>PPP2R1A</label>
    </interactant>
    <organismsDiffer>true</organismsDiffer>
    <experiments>3</experiments>
</comment>
<comment type="interaction">
    <interactant intactId="EBI-866453">
        <id>P03129</id>
    </interactant>
    <interactant intactId="EBI-491274">
        <id>P06400</id>
        <label>RB1</label>
    </interactant>
    <organismsDiffer>true</organismsDiffer>
    <experiments>23</experiments>
</comment>
<comment type="interaction">
    <interactant intactId="EBI-866453">
        <id>P03129</id>
    </interactant>
    <interactant intactId="EBI-971402">
        <id>P28749</id>
        <label>RBL1</label>
    </interactant>
    <organismsDiffer>true</organismsDiffer>
    <experiments>4</experiments>
</comment>
<comment type="interaction">
    <interactant intactId="EBI-866453">
        <id>P03129</id>
    </interactant>
    <interactant intactId="EBI-520756">
        <id>O15304</id>
        <label>SIVA1</label>
    </interactant>
    <organismsDiffer>true</organismsDiffer>
    <experiments>4</experiments>
</comment>
<comment type="interaction">
    <interactant intactId="EBI-866453">
        <id>P03129</id>
    </interactant>
    <interactant intactId="EBI-752268">
        <id>Q14188</id>
        <label>TFDP2</label>
    </interactant>
    <organismsDiffer>true</organismsDiffer>
    <experiments>2</experiments>
</comment>
<comment type="interaction">
    <interactant intactId="EBI-866453">
        <id>P03129</id>
    </interactant>
    <interactant intactId="EBI-1995940">
        <id>Q5T4S7</id>
        <label>UBR4</label>
    </interactant>
    <organismsDiffer>true</organismsDiffer>
    <experiments>5</experiments>
</comment>
<comment type="interaction">
    <interactant intactId="EBI-866453">
        <id>P03129</id>
    </interactant>
    <interactant intactId="EBI-306876">
        <id>P51784</id>
        <label>USP11</label>
    </interactant>
    <organismsDiffer>true</organismsDiffer>
    <experiments>6</experiments>
</comment>
<comment type="subcellular location">
    <subcellularLocation>
        <location evidence="1 10 12">Host cytoplasm</location>
    </subcellularLocation>
    <subcellularLocation>
        <location evidence="1 10">Host nucleus</location>
    </subcellularLocation>
    <text evidence="1 10">Predominantly found in the host nucleus.</text>
</comment>
<comment type="domain">
    <text evidence="1 9">The E7 terminal domain is an intrinsically disordered domain, whose flexibility and conformational transitions confer target adaptability to the oncoprotein. It allows adaptation to a variety of protein targets and exposes the PEST degradation sequence that regulates its turnover in the cell.</text>
</comment>
<comment type="PTM">
    <text evidence="1 12">Highly phosphorylated.</text>
</comment>
<comment type="miscellaneous">
    <text>HPV16, in comparison to HPV types 6 and 11, is more often associated with malignant genital cancers in humans.</text>
</comment>
<comment type="miscellaneous">
    <text evidence="13 14">Part of the antigens expressed and presented within HPV-positive head and neck tumors.</text>
</comment>
<comment type="similarity">
    <text evidence="1">Belongs to the papillomaviridae E7 protein family.</text>
</comment>
<accession>P03129</accession>
<keyword id="KW-0002">3D-structure</keyword>
<keyword id="KW-0010">Activator</keyword>
<keyword id="KW-0238">DNA-binding</keyword>
<keyword id="KW-0244">Early protein</keyword>
<keyword id="KW-1078">G1/S host cell cycle checkpoint dysregulation by virus</keyword>
<keyword id="KW-1035">Host cytoplasm</keyword>
<keyword id="KW-1048">Host nucleus</keyword>
<keyword id="KW-0945">Host-virus interaction</keyword>
<keyword id="KW-1090">Inhibition of host innate immune response by virus</keyword>
<keyword id="KW-1114">Inhibition of host interferon signaling pathway by virus</keyword>
<keyword id="KW-0922">Interferon antiviral system evasion</keyword>
<keyword id="KW-0479">Metal-binding</keyword>
<keyword id="KW-1121">Modulation of host cell cycle by virus</keyword>
<keyword id="KW-0553">Oncogene</keyword>
<keyword id="KW-1185">Reference proteome</keyword>
<keyword id="KW-0804">Transcription</keyword>
<keyword id="KW-0805">Transcription regulation</keyword>
<keyword id="KW-0899">Viral immunoevasion</keyword>
<keyword id="KW-0862">Zinc</keyword>
<keyword id="KW-0863">Zinc-finger</keyword>
<protein>
    <recommendedName>
        <fullName evidence="1">Protein E7</fullName>
    </recommendedName>
</protein>
<organismHost>
    <name type="scientific">Homo sapiens</name>
    <name type="common">Human</name>
    <dbReference type="NCBI Taxonomy" id="9606"/>
</organismHost>
<proteinExistence type="evidence at protein level"/>
<dbReference type="EMBL" id="K02718">
    <property type="protein sequence ID" value="AAA46940.1"/>
    <property type="molecule type" value="Genomic_DNA"/>
</dbReference>
<dbReference type="EMBL" id="D00735">
    <property type="protein sequence ID" value="BAA00633.1"/>
    <property type="molecule type" value="Genomic_DNA"/>
</dbReference>
<dbReference type="EMBL" id="AF003020">
    <property type="protein sequence ID" value="AAB70737.1"/>
    <property type="molecule type" value="Genomic_DNA"/>
</dbReference>
<dbReference type="EMBL" id="AF003023">
    <property type="protein sequence ID" value="AAB70740.1"/>
    <property type="molecule type" value="Genomic_DNA"/>
</dbReference>
<dbReference type="EMBL" id="AF003024">
    <property type="protein sequence ID" value="AAB70741.1"/>
    <property type="molecule type" value="Genomic_DNA"/>
</dbReference>
<dbReference type="EMBL" id="AF003025">
    <property type="protein sequence ID" value="AAB70742.1"/>
    <property type="molecule type" value="Genomic_DNA"/>
</dbReference>
<dbReference type="EMBL" id="AF003026">
    <property type="protein sequence ID" value="AAB70743.1"/>
    <property type="molecule type" value="Genomic_DNA"/>
</dbReference>
<dbReference type="EMBL" id="U76411">
    <property type="protein sequence ID" value="AAB18962.1"/>
    <property type="molecule type" value="Genomic_DNA"/>
</dbReference>
<dbReference type="EMBL" id="U76412">
    <property type="protein sequence ID" value="AAB18963.1"/>
    <property type="molecule type" value="Genomic_DNA"/>
</dbReference>
<dbReference type="EMBL" id="U76413">
    <property type="protein sequence ID" value="AAB18964.1"/>
    <property type="molecule type" value="Genomic_DNA"/>
</dbReference>
<dbReference type="EMBL" id="AF536179">
    <property type="protein sequence ID" value="AAQ10713.1"/>
    <property type="molecule type" value="Genomic_DNA"/>
</dbReference>
<dbReference type="EMBL" id="AF536180">
    <property type="protein sequence ID" value="AAQ10721.1"/>
    <property type="molecule type" value="Genomic_DNA"/>
</dbReference>
<dbReference type="PIR" id="A03688">
    <property type="entry name" value="W7WLHS"/>
</dbReference>
<dbReference type="RefSeq" id="NP_041326.1">
    <property type="nucleotide sequence ID" value="NC_001526.4"/>
</dbReference>
<dbReference type="PDB" id="4YOZ">
    <property type="method" value="X-ray"/>
    <property type="resolution" value="2.25 A"/>
    <property type="chains" value="B=21-29"/>
</dbReference>
<dbReference type="PDB" id="6APN">
    <property type="method" value="X-ray"/>
    <property type="resolution" value="2.22 A"/>
    <property type="chains" value="A/B=82-90"/>
</dbReference>
<dbReference type="PDB" id="7SQP">
    <property type="method" value="X-ray"/>
    <property type="resolution" value="2.53 A"/>
    <property type="chains" value="A/C=11-22"/>
</dbReference>
<dbReference type="PDB" id="7SR0">
    <property type="method" value="X-ray"/>
    <property type="resolution" value="2.54 A"/>
    <property type="chains" value="A/C=11-19"/>
</dbReference>
<dbReference type="PDB" id="7SR3">
    <property type="method" value="X-ray"/>
    <property type="resolution" value="2.49 A"/>
    <property type="chains" value="A/C=11-22"/>
</dbReference>
<dbReference type="PDB" id="7SR4">
    <property type="method" value="X-ray"/>
    <property type="resolution" value="2.59 A"/>
    <property type="chains" value="A/C=11-24"/>
</dbReference>
<dbReference type="PDB" id="7SSH">
    <property type="method" value="X-ray"/>
    <property type="resolution" value="2.73 A"/>
    <property type="chains" value="A/C/E/G/I/K/M/O/Q/S/U/W/Y/a/c/e=11-24"/>
</dbReference>
<dbReference type="PDB" id="7ST3">
    <property type="method" value="X-ray"/>
    <property type="resolution" value="2.78 A"/>
    <property type="chains" value="A/C/E/G/I/K/M/O/Q/S/U/W/Y/a/c/e=11-24"/>
</dbReference>
<dbReference type="PDBsum" id="4YOZ"/>
<dbReference type="PDBsum" id="6APN"/>
<dbReference type="PDBsum" id="7SQP"/>
<dbReference type="PDBsum" id="7SR0"/>
<dbReference type="PDBsum" id="7SR3"/>
<dbReference type="PDBsum" id="7SR4"/>
<dbReference type="PDBsum" id="7SSH"/>
<dbReference type="PDBsum" id="7ST3"/>
<dbReference type="BMRB" id="P03129"/>
<dbReference type="SMR" id="P03129"/>
<dbReference type="BioGRID" id="4263558">
    <property type="interactions" value="259"/>
</dbReference>
<dbReference type="DIP" id="DIP-1090N"/>
<dbReference type="IntAct" id="P03129">
    <property type="interactions" value="120"/>
</dbReference>
<dbReference type="MINT" id="P03129"/>
<dbReference type="ChEMBL" id="CHEMBL4630866"/>
<dbReference type="iPTMnet" id="P03129"/>
<dbReference type="ABCD" id="P03129">
    <property type="antibodies" value="10 sequenced antibodies"/>
</dbReference>
<dbReference type="DNASU" id="1489079"/>
<dbReference type="GeneID" id="1489079"/>
<dbReference type="KEGG" id="vg:1489079"/>
<dbReference type="OrthoDB" id="28045at10239"/>
<dbReference type="EvolutionaryTrace" id="P03129"/>
<dbReference type="Proteomes" id="UP000009251">
    <property type="component" value="Segment"/>
</dbReference>
<dbReference type="Proteomes" id="UP000106302">
    <property type="component" value="Genome"/>
</dbReference>
<dbReference type="Proteomes" id="UP000115181">
    <property type="component" value="Genome"/>
</dbReference>
<dbReference type="GO" id="GO:0030430">
    <property type="term" value="C:host cell cytoplasm"/>
    <property type="evidence" value="ECO:0007669"/>
    <property type="project" value="UniProtKB-SubCell"/>
</dbReference>
<dbReference type="GO" id="GO:0042025">
    <property type="term" value="C:host cell nucleus"/>
    <property type="evidence" value="ECO:0007669"/>
    <property type="project" value="UniProtKB-SubCell"/>
</dbReference>
<dbReference type="GO" id="GO:0046870">
    <property type="term" value="F:cadmium ion binding"/>
    <property type="evidence" value="ECO:0000314"/>
    <property type="project" value="CAFA"/>
</dbReference>
<dbReference type="GO" id="GO:0003677">
    <property type="term" value="F:DNA binding"/>
    <property type="evidence" value="ECO:0007669"/>
    <property type="project" value="UniProtKB-UniRule"/>
</dbReference>
<dbReference type="GO" id="GO:0003700">
    <property type="term" value="F:DNA-binding transcription factor activity"/>
    <property type="evidence" value="ECO:0007669"/>
    <property type="project" value="UniProtKB-UniRule"/>
</dbReference>
<dbReference type="GO" id="GO:0140297">
    <property type="term" value="F:DNA-binding transcription factor binding"/>
    <property type="evidence" value="ECO:0000314"/>
    <property type="project" value="CAFA"/>
</dbReference>
<dbReference type="GO" id="GO:0019904">
    <property type="term" value="F:protein domain specific binding"/>
    <property type="evidence" value="ECO:0007669"/>
    <property type="project" value="UniProtKB-UniRule"/>
</dbReference>
<dbReference type="GO" id="GO:0008270">
    <property type="term" value="F:zinc ion binding"/>
    <property type="evidence" value="ECO:0000314"/>
    <property type="project" value="CAFA"/>
</dbReference>
<dbReference type="GO" id="GO:0006351">
    <property type="term" value="P:DNA-templated transcription"/>
    <property type="evidence" value="ECO:0007669"/>
    <property type="project" value="UniProtKB-UniRule"/>
</dbReference>
<dbReference type="GO" id="GO:0030838">
    <property type="term" value="P:positive regulation of actin filament polymerization"/>
    <property type="evidence" value="ECO:0000314"/>
    <property type="project" value="UniProtKB"/>
</dbReference>
<dbReference type="GO" id="GO:0039645">
    <property type="term" value="P:symbiont-mediated perturbation of host cell cycle G1/S transition checkpoint"/>
    <property type="evidence" value="ECO:0007669"/>
    <property type="project" value="UniProtKB-UniRule"/>
</dbReference>
<dbReference type="GO" id="GO:0044071">
    <property type="term" value="P:symbiont-mediated perturbation of host cell cycle progression"/>
    <property type="evidence" value="ECO:0000269"/>
    <property type="project" value="SigSci"/>
</dbReference>
<dbReference type="GO" id="GO:0052026">
    <property type="term" value="P:symbiont-mediated perturbation of host transcription"/>
    <property type="evidence" value="ECO:0000315"/>
    <property type="project" value="UniProtKB"/>
</dbReference>
<dbReference type="GO" id="GO:0033668">
    <property type="term" value="P:symbiont-mediated suppression of host apoptosis"/>
    <property type="evidence" value="ECO:0000315"/>
    <property type="project" value="UniProtKB"/>
</dbReference>
<dbReference type="GO" id="GO:0141074">
    <property type="term" value="P:symbiont-mediated suppression of host cGAS-STING signal transduction"/>
    <property type="evidence" value="ECO:0000269"/>
    <property type="project" value="SigSci"/>
</dbReference>
<dbReference type="GO" id="GO:0039560">
    <property type="term" value="P:symbiont-mediated suppression of host JAK-STAT cascade via inhibition of host IRF9 activity"/>
    <property type="evidence" value="ECO:0000314"/>
    <property type="project" value="UniProtKB"/>
</dbReference>
<dbReference type="GO" id="GO:0039502">
    <property type="term" value="P:symbiont-mediated suppression of host type I interferon-mediated signaling pathway"/>
    <property type="evidence" value="ECO:0007669"/>
    <property type="project" value="UniProtKB-UniRule"/>
</dbReference>
<dbReference type="GO" id="GO:0016032">
    <property type="term" value="P:viral process"/>
    <property type="evidence" value="ECO:0000269"/>
    <property type="project" value="DisProt"/>
</dbReference>
<dbReference type="DisProt" id="DP00024"/>
<dbReference type="FunFam" id="3.30.160.330:FF:000001">
    <property type="entry name" value="Protein E7"/>
    <property type="match status" value="1"/>
</dbReference>
<dbReference type="Gene3D" id="3.30.160.330">
    <property type="match status" value="1"/>
</dbReference>
<dbReference type="HAMAP" id="MF_04004">
    <property type="entry name" value="PPV_E7"/>
    <property type="match status" value="1"/>
</dbReference>
<dbReference type="InterPro" id="IPR000148">
    <property type="entry name" value="Papilloma_E7"/>
</dbReference>
<dbReference type="Pfam" id="PF00527">
    <property type="entry name" value="E7"/>
    <property type="match status" value="1"/>
</dbReference>
<dbReference type="PIRSF" id="PIRSF003407">
    <property type="entry name" value="Papvi_E7"/>
    <property type="match status" value="1"/>
</dbReference>
<dbReference type="SUPFAM" id="SSF161234">
    <property type="entry name" value="E7 C-terminal domain-like"/>
    <property type="match status" value="1"/>
</dbReference>
<sequence length="98" mass="11022">MHGDTPTLHEYMLDLQPETTDLYCYEQLNDSSEEEDEIDGPAGQAEPDRAHYNIVTFCCKCDSTLRLCVQSTHVDIRTLEDLLMGTLGIVCPICSQKP</sequence>
<gene>
    <name evidence="1" type="primary">E7</name>
</gene>
<evidence type="ECO:0000255" key="1">
    <source>
        <dbReference type="HAMAP-Rule" id="MF_04004"/>
    </source>
</evidence>
<evidence type="ECO:0000269" key="2">
    <source>
    </source>
</evidence>
<evidence type="ECO:0000269" key="3">
    <source>
    </source>
</evidence>
<evidence type="ECO:0000269" key="4">
    <source>
    </source>
</evidence>
<evidence type="ECO:0000269" key="5">
    <source>
    </source>
</evidence>
<evidence type="ECO:0000269" key="6">
    <source>
    </source>
</evidence>
<evidence type="ECO:0000269" key="7">
    <source>
    </source>
</evidence>
<evidence type="ECO:0000269" key="8">
    <source>
    </source>
</evidence>
<evidence type="ECO:0000269" key="9">
    <source>
    </source>
</evidence>
<evidence type="ECO:0000269" key="10">
    <source>
    </source>
</evidence>
<evidence type="ECO:0000269" key="11">
    <source>
    </source>
</evidence>
<evidence type="ECO:0000269" key="12">
    <source>
    </source>
</evidence>
<evidence type="ECO:0000269" key="13">
    <source>
    </source>
</evidence>
<evidence type="ECO:0000269" key="14">
    <source>
    </source>
</evidence>
<evidence type="ECO:0007829" key="15">
    <source>
        <dbReference type="PDB" id="7SR3"/>
    </source>
</evidence>